<evidence type="ECO:0000250" key="1"/>
<evidence type="ECO:0000255" key="2">
    <source>
        <dbReference type="HAMAP-Rule" id="MF_00100"/>
    </source>
</evidence>
<evidence type="ECO:0000256" key="3">
    <source>
        <dbReference type="SAM" id="MobiDB-lite"/>
    </source>
</evidence>
<protein>
    <recommendedName>
        <fullName evidence="2">Translation initiation factor IF-2</fullName>
    </recommendedName>
</protein>
<comment type="function">
    <text evidence="2">One of the essential components for the initiation of protein synthesis. Protects formylmethionyl-tRNA from spontaneous hydrolysis and promotes its binding to the 30S ribosomal subunits. Also involved in the hydrolysis of GTP during the formation of the 70S ribosomal complex.</text>
</comment>
<comment type="subcellular location">
    <subcellularLocation>
        <location evidence="2">Cytoplasm</location>
    </subcellularLocation>
</comment>
<comment type="similarity">
    <text evidence="2">Belongs to the TRAFAC class translation factor GTPase superfamily. Classic translation factor GTPase family. IF-2 subfamily.</text>
</comment>
<organism>
    <name type="scientific">Klebsiella pneumoniae (strain 342)</name>
    <dbReference type="NCBI Taxonomy" id="507522"/>
    <lineage>
        <taxon>Bacteria</taxon>
        <taxon>Pseudomonadati</taxon>
        <taxon>Pseudomonadota</taxon>
        <taxon>Gammaproteobacteria</taxon>
        <taxon>Enterobacterales</taxon>
        <taxon>Enterobacteriaceae</taxon>
        <taxon>Klebsiella/Raoultella group</taxon>
        <taxon>Klebsiella</taxon>
        <taxon>Klebsiella pneumoniae complex</taxon>
    </lineage>
</organism>
<name>IF2_KLEP3</name>
<proteinExistence type="inferred from homology"/>
<gene>
    <name evidence="2" type="primary">infB</name>
    <name type="ordered locus">KPK_0546</name>
</gene>
<sequence length="896" mass="98074">MTDVTIKALASEIQTSVDRLIQQFADAGIRKSADDSVTAQEKQTLLTHLNREHGSAPDKLTLQRKTRSTLNIPGTGGKSKSVQIEVRKKRTFVKRDPQEAERLAAEEQAQREAEEQARREAEEAAKREAQLKAEREAAEQAKREVADKAKREAAEKDKVSNQHTDEMTKTAQAEKIRRENEAAELKRKSEEEARRKLEEEARRVAEEARRMAEENEKNWSETSDSPEDSSDYHVTTSQHARQAEDDNDREVEGGRGRSRSSKAARPAKKGNKHAESKADREEARAAVRGGKGGKHRKGSALQQGFQKPAQAVNRDVIIGETITVGELANKMAVKGSQVIKAMMKLGAMATINQVIDQETAQLVAEEMGHKVILRRENELEEAVMSDRDTGAAAEPRAPVVTIMGHVDHGKTSLLDYIRSTKVASGEAGGITQHIGAYHVETDNGMITFLDTPGHAAFTSMRARGAQATDIVVLVVAADDGVMPQTIEAIQHAKAAQVPVVVAVNKIDKPEADPDRVKNELSQYGILPEEWGGESQFVHVSAKAGTGIDDLLDAILLQAEVLELKAVRNGMASGAVIESFLDKGRGPVATVLVREGTLHKGDIVLCGFEYGRVRAMRDELGREVLEAGPSIPVEILGLSGVPAAGDEVTVVRDEKKAREVALYRQGKFREVKLARQQKSKLENMFANMTEGEVHEVNIVLKADVQGSVEAISDSLLKLSTDEVKVKIIGSGVGGITETDATLAAASNAILVGFNVRADASARKVIEAESLDLRYYSVIYNLIDEVKAAMSGMLSPELKQQIIGLAEVRDVFKSPKFGAIAGCMVTEGTIKRHNPIRVLRDNVVIYEGELESLRRFKDDVNEVRNGMECGIGVKNYNDVRVGDMIEVFEIIEIQRSID</sequence>
<keyword id="KW-0963">Cytoplasm</keyword>
<keyword id="KW-0342">GTP-binding</keyword>
<keyword id="KW-0396">Initiation factor</keyword>
<keyword id="KW-0547">Nucleotide-binding</keyword>
<keyword id="KW-0648">Protein biosynthesis</keyword>
<reference key="1">
    <citation type="journal article" date="2008" name="PLoS Genet.">
        <title>Complete genome sequence of the N2-fixing broad host range endophyte Klebsiella pneumoniae 342 and virulence predictions verified in mice.</title>
        <authorList>
            <person name="Fouts D.E."/>
            <person name="Tyler H.L."/>
            <person name="DeBoy R.T."/>
            <person name="Daugherty S."/>
            <person name="Ren Q."/>
            <person name="Badger J.H."/>
            <person name="Durkin A.S."/>
            <person name="Huot H."/>
            <person name="Shrivastava S."/>
            <person name="Kothari S."/>
            <person name="Dodson R.J."/>
            <person name="Mohamoud Y."/>
            <person name="Khouri H."/>
            <person name="Roesch L.F.W."/>
            <person name="Krogfelt K.A."/>
            <person name="Struve C."/>
            <person name="Triplett E.W."/>
            <person name="Methe B.A."/>
        </authorList>
    </citation>
    <scope>NUCLEOTIDE SEQUENCE [LARGE SCALE GENOMIC DNA]</scope>
    <source>
        <strain>342</strain>
    </source>
</reference>
<feature type="chain" id="PRO_1000093794" description="Translation initiation factor IF-2">
    <location>
        <begin position="1"/>
        <end position="896"/>
    </location>
</feature>
<feature type="domain" description="tr-type G">
    <location>
        <begin position="395"/>
        <end position="564"/>
    </location>
</feature>
<feature type="region of interest" description="Disordered" evidence="3">
    <location>
        <begin position="93"/>
        <end position="307"/>
    </location>
</feature>
<feature type="region of interest" description="G1" evidence="1">
    <location>
        <begin position="404"/>
        <end position="411"/>
    </location>
</feature>
<feature type="region of interest" description="G2" evidence="1">
    <location>
        <begin position="429"/>
        <end position="433"/>
    </location>
</feature>
<feature type="region of interest" description="G3" evidence="1">
    <location>
        <begin position="450"/>
        <end position="453"/>
    </location>
</feature>
<feature type="region of interest" description="G4" evidence="1">
    <location>
        <begin position="504"/>
        <end position="507"/>
    </location>
</feature>
<feature type="region of interest" description="G5" evidence="1">
    <location>
        <begin position="540"/>
        <end position="542"/>
    </location>
</feature>
<feature type="compositionally biased region" description="Basic and acidic residues" evidence="3">
    <location>
        <begin position="93"/>
        <end position="219"/>
    </location>
</feature>
<feature type="compositionally biased region" description="Basic residues" evidence="3">
    <location>
        <begin position="256"/>
        <end position="271"/>
    </location>
</feature>
<feature type="compositionally biased region" description="Basic and acidic residues" evidence="3">
    <location>
        <begin position="272"/>
        <end position="285"/>
    </location>
</feature>
<feature type="binding site" evidence="2">
    <location>
        <begin position="404"/>
        <end position="411"/>
    </location>
    <ligand>
        <name>GTP</name>
        <dbReference type="ChEBI" id="CHEBI:37565"/>
    </ligand>
</feature>
<feature type="binding site" evidence="2">
    <location>
        <begin position="450"/>
        <end position="454"/>
    </location>
    <ligand>
        <name>GTP</name>
        <dbReference type="ChEBI" id="CHEBI:37565"/>
    </ligand>
</feature>
<feature type="binding site" evidence="2">
    <location>
        <begin position="504"/>
        <end position="507"/>
    </location>
    <ligand>
        <name>GTP</name>
        <dbReference type="ChEBI" id="CHEBI:37565"/>
    </ligand>
</feature>
<accession>B5XSX4</accession>
<dbReference type="EMBL" id="CP000964">
    <property type="protein sequence ID" value="ACI07533.1"/>
    <property type="molecule type" value="Genomic_DNA"/>
</dbReference>
<dbReference type="SMR" id="B5XSX4"/>
<dbReference type="KEGG" id="kpe:KPK_0546"/>
<dbReference type="HOGENOM" id="CLU_006301_6_3_6"/>
<dbReference type="Proteomes" id="UP000001734">
    <property type="component" value="Chromosome"/>
</dbReference>
<dbReference type="GO" id="GO:0005829">
    <property type="term" value="C:cytosol"/>
    <property type="evidence" value="ECO:0007669"/>
    <property type="project" value="TreeGrafter"/>
</dbReference>
<dbReference type="GO" id="GO:0005525">
    <property type="term" value="F:GTP binding"/>
    <property type="evidence" value="ECO:0007669"/>
    <property type="project" value="UniProtKB-KW"/>
</dbReference>
<dbReference type="GO" id="GO:0003924">
    <property type="term" value="F:GTPase activity"/>
    <property type="evidence" value="ECO:0007669"/>
    <property type="project" value="UniProtKB-UniRule"/>
</dbReference>
<dbReference type="GO" id="GO:0097216">
    <property type="term" value="F:guanosine tetraphosphate binding"/>
    <property type="evidence" value="ECO:0007669"/>
    <property type="project" value="UniProtKB-ARBA"/>
</dbReference>
<dbReference type="GO" id="GO:0003743">
    <property type="term" value="F:translation initiation factor activity"/>
    <property type="evidence" value="ECO:0007669"/>
    <property type="project" value="UniProtKB-UniRule"/>
</dbReference>
<dbReference type="CDD" id="cd01887">
    <property type="entry name" value="IF2_eIF5B"/>
    <property type="match status" value="1"/>
</dbReference>
<dbReference type="CDD" id="cd03702">
    <property type="entry name" value="IF2_mtIF2_II"/>
    <property type="match status" value="1"/>
</dbReference>
<dbReference type="CDD" id="cd03692">
    <property type="entry name" value="mtIF2_IVc"/>
    <property type="match status" value="1"/>
</dbReference>
<dbReference type="FunFam" id="2.40.30.10:FF:000007">
    <property type="entry name" value="Translation initiation factor IF-2"/>
    <property type="match status" value="1"/>
</dbReference>
<dbReference type="FunFam" id="2.40.30.10:FF:000008">
    <property type="entry name" value="Translation initiation factor IF-2"/>
    <property type="match status" value="1"/>
</dbReference>
<dbReference type="FunFam" id="3.30.56.50:FF:000001">
    <property type="entry name" value="Translation initiation factor IF-2"/>
    <property type="match status" value="1"/>
</dbReference>
<dbReference type="FunFam" id="3.40.50.10050:FF:000001">
    <property type="entry name" value="Translation initiation factor IF-2"/>
    <property type="match status" value="1"/>
</dbReference>
<dbReference type="FunFam" id="3.40.50.300:FF:000019">
    <property type="entry name" value="Translation initiation factor IF-2"/>
    <property type="match status" value="1"/>
</dbReference>
<dbReference type="Gene3D" id="3.40.50.300">
    <property type="entry name" value="P-loop containing nucleotide triphosphate hydrolases"/>
    <property type="match status" value="1"/>
</dbReference>
<dbReference type="Gene3D" id="3.30.56.50">
    <property type="entry name" value="Putative DNA-binding domain, N-terminal subdomain of bacterial translation initiation factor IF2"/>
    <property type="match status" value="1"/>
</dbReference>
<dbReference type="Gene3D" id="2.40.30.10">
    <property type="entry name" value="Translation factors"/>
    <property type="match status" value="2"/>
</dbReference>
<dbReference type="Gene3D" id="3.40.50.10050">
    <property type="entry name" value="Translation initiation factor IF- 2, domain 3"/>
    <property type="match status" value="1"/>
</dbReference>
<dbReference type="HAMAP" id="MF_00100_B">
    <property type="entry name" value="IF_2_B"/>
    <property type="match status" value="1"/>
</dbReference>
<dbReference type="InterPro" id="IPR009061">
    <property type="entry name" value="DNA-bd_dom_put_sf"/>
</dbReference>
<dbReference type="InterPro" id="IPR053905">
    <property type="entry name" value="EF-G-like_DII"/>
</dbReference>
<dbReference type="InterPro" id="IPR004161">
    <property type="entry name" value="EFTu-like_2"/>
</dbReference>
<dbReference type="InterPro" id="IPR013575">
    <property type="entry name" value="IF2_assoc_dom_bac"/>
</dbReference>
<dbReference type="InterPro" id="IPR044145">
    <property type="entry name" value="IF2_II"/>
</dbReference>
<dbReference type="InterPro" id="IPR006847">
    <property type="entry name" value="IF2_N"/>
</dbReference>
<dbReference type="InterPro" id="IPR027417">
    <property type="entry name" value="P-loop_NTPase"/>
</dbReference>
<dbReference type="InterPro" id="IPR005225">
    <property type="entry name" value="Small_GTP-bd"/>
</dbReference>
<dbReference type="InterPro" id="IPR000795">
    <property type="entry name" value="T_Tr_GTP-bd_dom"/>
</dbReference>
<dbReference type="InterPro" id="IPR000178">
    <property type="entry name" value="TF_IF2_bacterial-like"/>
</dbReference>
<dbReference type="InterPro" id="IPR015760">
    <property type="entry name" value="TIF_IF2"/>
</dbReference>
<dbReference type="InterPro" id="IPR023115">
    <property type="entry name" value="TIF_IF2_dom3"/>
</dbReference>
<dbReference type="InterPro" id="IPR036925">
    <property type="entry name" value="TIF_IF2_dom3_sf"/>
</dbReference>
<dbReference type="InterPro" id="IPR009000">
    <property type="entry name" value="Transl_B-barrel_sf"/>
</dbReference>
<dbReference type="NCBIfam" id="TIGR00487">
    <property type="entry name" value="IF-2"/>
    <property type="match status" value="1"/>
</dbReference>
<dbReference type="NCBIfam" id="TIGR00231">
    <property type="entry name" value="small_GTP"/>
    <property type="match status" value="1"/>
</dbReference>
<dbReference type="PANTHER" id="PTHR43381:SF5">
    <property type="entry name" value="TR-TYPE G DOMAIN-CONTAINING PROTEIN"/>
    <property type="match status" value="1"/>
</dbReference>
<dbReference type="PANTHER" id="PTHR43381">
    <property type="entry name" value="TRANSLATION INITIATION FACTOR IF-2-RELATED"/>
    <property type="match status" value="1"/>
</dbReference>
<dbReference type="Pfam" id="PF22042">
    <property type="entry name" value="EF-G_D2"/>
    <property type="match status" value="1"/>
</dbReference>
<dbReference type="Pfam" id="PF00009">
    <property type="entry name" value="GTP_EFTU"/>
    <property type="match status" value="1"/>
</dbReference>
<dbReference type="Pfam" id="PF03144">
    <property type="entry name" value="GTP_EFTU_D2"/>
    <property type="match status" value="1"/>
</dbReference>
<dbReference type="Pfam" id="PF11987">
    <property type="entry name" value="IF-2"/>
    <property type="match status" value="1"/>
</dbReference>
<dbReference type="Pfam" id="PF08364">
    <property type="entry name" value="IF2_assoc"/>
    <property type="match status" value="1"/>
</dbReference>
<dbReference type="Pfam" id="PF04760">
    <property type="entry name" value="IF2_N"/>
    <property type="match status" value="2"/>
</dbReference>
<dbReference type="SUPFAM" id="SSF52156">
    <property type="entry name" value="Initiation factor IF2/eIF5b, domain 3"/>
    <property type="match status" value="1"/>
</dbReference>
<dbReference type="SUPFAM" id="SSF52540">
    <property type="entry name" value="P-loop containing nucleoside triphosphate hydrolases"/>
    <property type="match status" value="1"/>
</dbReference>
<dbReference type="SUPFAM" id="SSF46955">
    <property type="entry name" value="Putative DNA-binding domain"/>
    <property type="match status" value="1"/>
</dbReference>
<dbReference type="SUPFAM" id="SSF50447">
    <property type="entry name" value="Translation proteins"/>
    <property type="match status" value="2"/>
</dbReference>
<dbReference type="PROSITE" id="PS51722">
    <property type="entry name" value="G_TR_2"/>
    <property type="match status" value="1"/>
</dbReference>
<dbReference type="PROSITE" id="PS01176">
    <property type="entry name" value="IF2"/>
    <property type="match status" value="1"/>
</dbReference>